<feature type="chain" id="PRO_0000332864" description="Cysteine--tRNA ligase">
    <location>
        <begin position="1"/>
        <end position="462"/>
    </location>
</feature>
<feature type="short sequence motif" description="'HIGH' region">
    <location>
        <begin position="32"/>
        <end position="42"/>
    </location>
</feature>
<feature type="short sequence motif" description="'KMSKS' region">
    <location>
        <begin position="279"/>
        <end position="283"/>
    </location>
</feature>
<feature type="binding site" evidence="1">
    <location>
        <position position="30"/>
    </location>
    <ligand>
        <name>Zn(2+)</name>
        <dbReference type="ChEBI" id="CHEBI:29105"/>
    </ligand>
</feature>
<feature type="binding site" evidence="1">
    <location>
        <position position="221"/>
    </location>
    <ligand>
        <name>Zn(2+)</name>
        <dbReference type="ChEBI" id="CHEBI:29105"/>
    </ligand>
</feature>
<feature type="binding site" evidence="1">
    <location>
        <position position="246"/>
    </location>
    <ligand>
        <name>Zn(2+)</name>
        <dbReference type="ChEBI" id="CHEBI:29105"/>
    </ligand>
</feature>
<feature type="binding site" evidence="1">
    <location>
        <position position="250"/>
    </location>
    <ligand>
        <name>Zn(2+)</name>
        <dbReference type="ChEBI" id="CHEBI:29105"/>
    </ligand>
</feature>
<feature type="binding site" evidence="1">
    <location>
        <position position="282"/>
    </location>
    <ligand>
        <name>ATP</name>
        <dbReference type="ChEBI" id="CHEBI:30616"/>
    </ligand>
</feature>
<keyword id="KW-0030">Aminoacyl-tRNA synthetase</keyword>
<keyword id="KW-0067">ATP-binding</keyword>
<keyword id="KW-0963">Cytoplasm</keyword>
<keyword id="KW-0436">Ligase</keyword>
<keyword id="KW-0479">Metal-binding</keyword>
<keyword id="KW-0547">Nucleotide-binding</keyword>
<keyword id="KW-0648">Protein biosynthesis</keyword>
<keyword id="KW-1185">Reference proteome</keyword>
<keyword id="KW-0862">Zinc</keyword>
<organism>
    <name type="scientific">Paracoccus denitrificans (strain Pd 1222)</name>
    <dbReference type="NCBI Taxonomy" id="318586"/>
    <lineage>
        <taxon>Bacteria</taxon>
        <taxon>Pseudomonadati</taxon>
        <taxon>Pseudomonadota</taxon>
        <taxon>Alphaproteobacteria</taxon>
        <taxon>Rhodobacterales</taxon>
        <taxon>Paracoccaceae</taxon>
        <taxon>Paracoccus</taxon>
    </lineage>
</organism>
<dbReference type="EC" id="6.1.1.16" evidence="1"/>
<dbReference type="EMBL" id="CP000490">
    <property type="protein sequence ID" value="ABL72129.1"/>
    <property type="molecule type" value="Genomic_DNA"/>
</dbReference>
<dbReference type="RefSeq" id="WP_011750297.1">
    <property type="nucleotide sequence ID" value="NC_008687.1"/>
</dbReference>
<dbReference type="SMR" id="A1B9D5"/>
<dbReference type="STRING" id="318586.Pden_4063"/>
<dbReference type="EnsemblBacteria" id="ABL72129">
    <property type="protein sequence ID" value="ABL72129"/>
    <property type="gene ID" value="Pden_4063"/>
</dbReference>
<dbReference type="GeneID" id="93453727"/>
<dbReference type="KEGG" id="pde:Pden_4063"/>
<dbReference type="eggNOG" id="COG0215">
    <property type="taxonomic scope" value="Bacteria"/>
</dbReference>
<dbReference type="HOGENOM" id="CLU_013528_0_1_5"/>
<dbReference type="OrthoDB" id="9815130at2"/>
<dbReference type="Proteomes" id="UP000000361">
    <property type="component" value="Chromosome 2"/>
</dbReference>
<dbReference type="GO" id="GO:0005829">
    <property type="term" value="C:cytosol"/>
    <property type="evidence" value="ECO:0007669"/>
    <property type="project" value="TreeGrafter"/>
</dbReference>
<dbReference type="GO" id="GO:0005524">
    <property type="term" value="F:ATP binding"/>
    <property type="evidence" value="ECO:0007669"/>
    <property type="project" value="UniProtKB-UniRule"/>
</dbReference>
<dbReference type="GO" id="GO:0004817">
    <property type="term" value="F:cysteine-tRNA ligase activity"/>
    <property type="evidence" value="ECO:0007669"/>
    <property type="project" value="UniProtKB-UniRule"/>
</dbReference>
<dbReference type="GO" id="GO:0008270">
    <property type="term" value="F:zinc ion binding"/>
    <property type="evidence" value="ECO:0007669"/>
    <property type="project" value="UniProtKB-UniRule"/>
</dbReference>
<dbReference type="GO" id="GO:0006423">
    <property type="term" value="P:cysteinyl-tRNA aminoacylation"/>
    <property type="evidence" value="ECO:0007669"/>
    <property type="project" value="UniProtKB-UniRule"/>
</dbReference>
<dbReference type="CDD" id="cd00672">
    <property type="entry name" value="CysRS_core"/>
    <property type="match status" value="1"/>
</dbReference>
<dbReference type="Gene3D" id="1.20.120.1910">
    <property type="entry name" value="Cysteine-tRNA ligase, C-terminal anti-codon recognition domain"/>
    <property type="match status" value="1"/>
</dbReference>
<dbReference type="Gene3D" id="3.40.50.620">
    <property type="entry name" value="HUPs"/>
    <property type="match status" value="1"/>
</dbReference>
<dbReference type="HAMAP" id="MF_00041">
    <property type="entry name" value="Cys_tRNA_synth"/>
    <property type="match status" value="1"/>
</dbReference>
<dbReference type="InterPro" id="IPR015803">
    <property type="entry name" value="Cys-tRNA-ligase"/>
</dbReference>
<dbReference type="InterPro" id="IPR015273">
    <property type="entry name" value="Cys-tRNA-synt_Ia_DALR"/>
</dbReference>
<dbReference type="InterPro" id="IPR024909">
    <property type="entry name" value="Cys-tRNA/MSH_ligase"/>
</dbReference>
<dbReference type="InterPro" id="IPR014729">
    <property type="entry name" value="Rossmann-like_a/b/a_fold"/>
</dbReference>
<dbReference type="InterPro" id="IPR032678">
    <property type="entry name" value="tRNA-synt_1_cat_dom"/>
</dbReference>
<dbReference type="InterPro" id="IPR009080">
    <property type="entry name" value="tRNAsynth_Ia_anticodon-bd"/>
</dbReference>
<dbReference type="NCBIfam" id="TIGR00435">
    <property type="entry name" value="cysS"/>
    <property type="match status" value="1"/>
</dbReference>
<dbReference type="PANTHER" id="PTHR10890:SF3">
    <property type="entry name" value="CYSTEINE--TRNA LIGASE, CYTOPLASMIC"/>
    <property type="match status" value="1"/>
</dbReference>
<dbReference type="PANTHER" id="PTHR10890">
    <property type="entry name" value="CYSTEINYL-TRNA SYNTHETASE"/>
    <property type="match status" value="1"/>
</dbReference>
<dbReference type="Pfam" id="PF09190">
    <property type="entry name" value="DALR_2"/>
    <property type="match status" value="1"/>
</dbReference>
<dbReference type="Pfam" id="PF01406">
    <property type="entry name" value="tRNA-synt_1e"/>
    <property type="match status" value="1"/>
</dbReference>
<dbReference type="PRINTS" id="PR00983">
    <property type="entry name" value="TRNASYNTHCYS"/>
</dbReference>
<dbReference type="SMART" id="SM00840">
    <property type="entry name" value="DALR_2"/>
    <property type="match status" value="1"/>
</dbReference>
<dbReference type="SUPFAM" id="SSF47323">
    <property type="entry name" value="Anticodon-binding domain of a subclass of class I aminoacyl-tRNA synthetases"/>
    <property type="match status" value="1"/>
</dbReference>
<dbReference type="SUPFAM" id="SSF52374">
    <property type="entry name" value="Nucleotidylyl transferase"/>
    <property type="match status" value="1"/>
</dbReference>
<sequence length="462" mass="50806">MVEIRLTNTRTRRKEVFRPIDPQNVRLYLCGPTVYDRAHLGNARPVVVIDVLVRLLRHLLGADHVTYVRNFTDVDDKINATALARKEAGTPGTLEELIRERTHETIGWYHADMDALGAERPDHEPRATDYIGEMIAMIETLIAGGHAYARDGHVLFRVRSYADYGKLSGRSVDDMIAGARVEVAPFKEDPMDFVLWKPSDDELPGWDSPWGRGRPGWHIECSAMSYELLGESFDIHAGGIDLQFPHHENEIAQSCCAHPHGDFARVWLHNEMLQVEGRKMSKSLGNFFTVRDLLDQGIPGEVIRFVLLSTHYRKPMDWTAEKAREAEAVLRRWRGLVAGVEPAPGPAPAVVAALADDLNTAGAIAALHEMAGQGDGPGLLAGARMLGLLTEDLGGWIAEGPDLSALTERMAALRADAKASKDFSAVDALKQRLLDAGVEVRMSAAGVELLPGPDFDAAKLPE</sequence>
<proteinExistence type="inferred from homology"/>
<protein>
    <recommendedName>
        <fullName evidence="1">Cysteine--tRNA ligase</fullName>
        <ecNumber evidence="1">6.1.1.16</ecNumber>
    </recommendedName>
    <alternativeName>
        <fullName evidence="1">Cysteinyl-tRNA synthetase</fullName>
        <shortName evidence="1">CysRS</shortName>
    </alternativeName>
</protein>
<name>SYC_PARDP</name>
<comment type="catalytic activity">
    <reaction evidence="1">
        <text>tRNA(Cys) + L-cysteine + ATP = L-cysteinyl-tRNA(Cys) + AMP + diphosphate</text>
        <dbReference type="Rhea" id="RHEA:17773"/>
        <dbReference type="Rhea" id="RHEA-COMP:9661"/>
        <dbReference type="Rhea" id="RHEA-COMP:9679"/>
        <dbReference type="ChEBI" id="CHEBI:30616"/>
        <dbReference type="ChEBI" id="CHEBI:33019"/>
        <dbReference type="ChEBI" id="CHEBI:35235"/>
        <dbReference type="ChEBI" id="CHEBI:78442"/>
        <dbReference type="ChEBI" id="CHEBI:78517"/>
        <dbReference type="ChEBI" id="CHEBI:456215"/>
        <dbReference type="EC" id="6.1.1.16"/>
    </reaction>
</comment>
<comment type="cofactor">
    <cofactor evidence="1">
        <name>Zn(2+)</name>
        <dbReference type="ChEBI" id="CHEBI:29105"/>
    </cofactor>
    <text evidence="1">Binds 1 zinc ion per subunit.</text>
</comment>
<comment type="subunit">
    <text evidence="1">Monomer.</text>
</comment>
<comment type="subcellular location">
    <subcellularLocation>
        <location evidence="1">Cytoplasm</location>
    </subcellularLocation>
</comment>
<comment type="similarity">
    <text evidence="1">Belongs to the class-I aminoacyl-tRNA synthetase family.</text>
</comment>
<reference key="1">
    <citation type="submission" date="2006-12" db="EMBL/GenBank/DDBJ databases">
        <title>Complete sequence of chromosome 2 of Paracoccus denitrificans PD1222.</title>
        <authorList>
            <person name="Copeland A."/>
            <person name="Lucas S."/>
            <person name="Lapidus A."/>
            <person name="Barry K."/>
            <person name="Detter J.C."/>
            <person name="Glavina del Rio T."/>
            <person name="Hammon N."/>
            <person name="Israni S."/>
            <person name="Dalin E."/>
            <person name="Tice H."/>
            <person name="Pitluck S."/>
            <person name="Munk A.C."/>
            <person name="Brettin T."/>
            <person name="Bruce D."/>
            <person name="Han C."/>
            <person name="Tapia R."/>
            <person name="Gilna P."/>
            <person name="Schmutz J."/>
            <person name="Larimer F."/>
            <person name="Land M."/>
            <person name="Hauser L."/>
            <person name="Kyrpides N."/>
            <person name="Lykidis A."/>
            <person name="Spiro S."/>
            <person name="Richardson D.J."/>
            <person name="Moir J.W.B."/>
            <person name="Ferguson S.J."/>
            <person name="van Spanning R.J.M."/>
            <person name="Richardson P."/>
        </authorList>
    </citation>
    <scope>NUCLEOTIDE SEQUENCE [LARGE SCALE GENOMIC DNA]</scope>
    <source>
        <strain>Pd 1222</strain>
    </source>
</reference>
<evidence type="ECO:0000255" key="1">
    <source>
        <dbReference type="HAMAP-Rule" id="MF_00041"/>
    </source>
</evidence>
<accession>A1B9D5</accession>
<gene>
    <name evidence="1" type="primary">cysS</name>
    <name type="ordered locus">Pden_4063</name>
</gene>